<proteinExistence type="evidence at protein level"/>
<organism>
    <name type="scientific">Homo sapiens</name>
    <name type="common">Human</name>
    <dbReference type="NCBI Taxonomy" id="9606"/>
    <lineage>
        <taxon>Eukaryota</taxon>
        <taxon>Metazoa</taxon>
        <taxon>Chordata</taxon>
        <taxon>Craniata</taxon>
        <taxon>Vertebrata</taxon>
        <taxon>Euteleostomi</taxon>
        <taxon>Mammalia</taxon>
        <taxon>Eutheria</taxon>
        <taxon>Euarchontoglires</taxon>
        <taxon>Primates</taxon>
        <taxon>Haplorrhini</taxon>
        <taxon>Catarrhini</taxon>
        <taxon>Hominidae</taxon>
        <taxon>Homo</taxon>
    </lineage>
</organism>
<accession>Q6UDR6</accession>
<accession>Q9BQN3</accession>
<reference key="1">
    <citation type="submission" date="2003-08" db="EMBL/GenBank/DDBJ databases">
        <title>Several Kunitz-type serine proteinase inhibitors are expressed in the epididymis.</title>
        <authorList>
            <person name="Clauss A."/>
            <person name="Lundwall A."/>
        </authorList>
    </citation>
    <scope>NUCLEOTIDE SEQUENCE [MRNA]</scope>
    <source>
        <tissue>Epididymis</tissue>
    </source>
</reference>
<reference key="2">
    <citation type="journal article" date="2001" name="Nature">
        <title>The DNA sequence and comparative analysis of human chromosome 20.</title>
        <authorList>
            <person name="Deloukas P."/>
            <person name="Matthews L.H."/>
            <person name="Ashurst J.L."/>
            <person name="Burton J."/>
            <person name="Gilbert J.G.R."/>
            <person name="Jones M."/>
            <person name="Stavrides G."/>
            <person name="Almeida J.P."/>
            <person name="Babbage A.K."/>
            <person name="Bagguley C.L."/>
            <person name="Bailey J."/>
            <person name="Barlow K.F."/>
            <person name="Bates K.N."/>
            <person name="Beard L.M."/>
            <person name="Beare D.M."/>
            <person name="Beasley O.P."/>
            <person name="Bird C.P."/>
            <person name="Blakey S.E."/>
            <person name="Bridgeman A.M."/>
            <person name="Brown A.J."/>
            <person name="Buck D."/>
            <person name="Burrill W.D."/>
            <person name="Butler A.P."/>
            <person name="Carder C."/>
            <person name="Carter N.P."/>
            <person name="Chapman J.C."/>
            <person name="Clamp M."/>
            <person name="Clark G."/>
            <person name="Clark L.N."/>
            <person name="Clark S.Y."/>
            <person name="Clee C.M."/>
            <person name="Clegg S."/>
            <person name="Cobley V.E."/>
            <person name="Collier R.E."/>
            <person name="Connor R.E."/>
            <person name="Corby N.R."/>
            <person name="Coulson A."/>
            <person name="Coville G.J."/>
            <person name="Deadman R."/>
            <person name="Dhami P.D."/>
            <person name="Dunn M."/>
            <person name="Ellington A.G."/>
            <person name="Frankland J.A."/>
            <person name="Fraser A."/>
            <person name="French L."/>
            <person name="Garner P."/>
            <person name="Grafham D.V."/>
            <person name="Griffiths C."/>
            <person name="Griffiths M.N.D."/>
            <person name="Gwilliam R."/>
            <person name="Hall R.E."/>
            <person name="Hammond S."/>
            <person name="Harley J.L."/>
            <person name="Heath P.D."/>
            <person name="Ho S."/>
            <person name="Holden J.L."/>
            <person name="Howden P.J."/>
            <person name="Huckle E."/>
            <person name="Hunt A.R."/>
            <person name="Hunt S.E."/>
            <person name="Jekosch K."/>
            <person name="Johnson C.M."/>
            <person name="Johnson D."/>
            <person name="Kay M.P."/>
            <person name="Kimberley A.M."/>
            <person name="King A."/>
            <person name="Knights A."/>
            <person name="Laird G.K."/>
            <person name="Lawlor S."/>
            <person name="Lehvaeslaiho M.H."/>
            <person name="Leversha M.A."/>
            <person name="Lloyd C."/>
            <person name="Lloyd D.M."/>
            <person name="Lovell J.D."/>
            <person name="Marsh V.L."/>
            <person name="Martin S.L."/>
            <person name="McConnachie L.J."/>
            <person name="McLay K."/>
            <person name="McMurray A.A."/>
            <person name="Milne S.A."/>
            <person name="Mistry D."/>
            <person name="Moore M.J.F."/>
            <person name="Mullikin J.C."/>
            <person name="Nickerson T."/>
            <person name="Oliver K."/>
            <person name="Parker A."/>
            <person name="Patel R."/>
            <person name="Pearce T.A.V."/>
            <person name="Peck A.I."/>
            <person name="Phillimore B.J.C.T."/>
            <person name="Prathalingam S.R."/>
            <person name="Plumb R.W."/>
            <person name="Ramsay H."/>
            <person name="Rice C.M."/>
            <person name="Ross M.T."/>
            <person name="Scott C.E."/>
            <person name="Sehra H.K."/>
            <person name="Shownkeen R."/>
            <person name="Sims S."/>
            <person name="Skuce C.D."/>
            <person name="Smith M.L."/>
            <person name="Soderlund C."/>
            <person name="Steward C.A."/>
            <person name="Sulston J.E."/>
            <person name="Swann R.M."/>
            <person name="Sycamore N."/>
            <person name="Taylor R."/>
            <person name="Tee L."/>
            <person name="Thomas D.W."/>
            <person name="Thorpe A."/>
            <person name="Tracey A."/>
            <person name="Tromans A.C."/>
            <person name="Vaudin M."/>
            <person name="Wall M."/>
            <person name="Wallis J.M."/>
            <person name="Whitehead S.L."/>
            <person name="Whittaker P."/>
            <person name="Willey D.L."/>
            <person name="Williams L."/>
            <person name="Williams S.A."/>
            <person name="Wilming L."/>
            <person name="Wray P.W."/>
            <person name="Hubbard T."/>
            <person name="Durbin R.M."/>
            <person name="Bentley D.R."/>
            <person name="Beck S."/>
            <person name="Rogers J."/>
        </authorList>
    </citation>
    <scope>NUCLEOTIDE SEQUENCE [LARGE SCALE GENOMIC DNA]</scope>
</reference>
<reference key="3">
    <citation type="submission" date="2005-09" db="EMBL/GenBank/DDBJ databases">
        <authorList>
            <person name="Mural R.J."/>
            <person name="Istrail S."/>
            <person name="Sutton G.G."/>
            <person name="Florea L."/>
            <person name="Halpern A.L."/>
            <person name="Mobarry C.M."/>
            <person name="Lippert R."/>
            <person name="Walenz B."/>
            <person name="Shatkay H."/>
            <person name="Dew I."/>
            <person name="Miller J.R."/>
            <person name="Flanigan M.J."/>
            <person name="Edwards N.J."/>
            <person name="Bolanos R."/>
            <person name="Fasulo D."/>
            <person name="Halldorsson B.V."/>
            <person name="Hannenhalli S."/>
            <person name="Turner R."/>
            <person name="Yooseph S."/>
            <person name="Lu F."/>
            <person name="Nusskern D.R."/>
            <person name="Shue B.C."/>
            <person name="Zheng X.H."/>
            <person name="Zhong F."/>
            <person name="Delcher A.L."/>
            <person name="Huson D.H."/>
            <person name="Kravitz S.A."/>
            <person name="Mouchard L."/>
            <person name="Reinert K."/>
            <person name="Remington K.A."/>
            <person name="Clark A.G."/>
            <person name="Waterman M.S."/>
            <person name="Eichler E.E."/>
            <person name="Adams M.D."/>
            <person name="Hunkapiller M.W."/>
            <person name="Myers E.W."/>
            <person name="Venter J.C."/>
        </authorList>
    </citation>
    <scope>NUCLEOTIDE SEQUENCE [LARGE SCALE GENOMIC DNA]</scope>
</reference>
<keyword id="KW-1015">Disulfide bond</keyword>
<keyword id="KW-0646">Protease inhibitor</keyword>
<keyword id="KW-1267">Proteomics identification</keyword>
<keyword id="KW-1185">Reference proteome</keyword>
<keyword id="KW-0964">Secreted</keyword>
<keyword id="KW-0722">Serine protease inhibitor</keyword>
<keyword id="KW-0732">Signal</keyword>
<name>SPIT4_HUMAN</name>
<dbReference type="EMBL" id="AY372173">
    <property type="protein sequence ID" value="AAR17082.1"/>
    <property type="molecule type" value="mRNA"/>
</dbReference>
<dbReference type="EMBL" id="AY372174">
    <property type="protein sequence ID" value="AAR17083.1"/>
    <property type="molecule type" value="mRNA"/>
</dbReference>
<dbReference type="EMBL" id="AL109656">
    <property type="status" value="NOT_ANNOTATED_CDS"/>
    <property type="molecule type" value="Genomic_DNA"/>
</dbReference>
<dbReference type="EMBL" id="CH471077">
    <property type="protein sequence ID" value="EAW75818.1"/>
    <property type="molecule type" value="Genomic_DNA"/>
</dbReference>
<dbReference type="CCDS" id="CCDS33477.1"/>
<dbReference type="RefSeq" id="NP_848550.1">
    <property type="nucleotide sequence ID" value="NM_178455.3"/>
</dbReference>
<dbReference type="SMR" id="Q6UDR6"/>
<dbReference type="STRING" id="9606.ENSP00000279058"/>
<dbReference type="MEROPS" id="I02.975"/>
<dbReference type="GlyCosmos" id="Q6UDR6">
    <property type="glycosylation" value="1 site, 1 glycan"/>
</dbReference>
<dbReference type="GlyGen" id="Q6UDR6">
    <property type="glycosylation" value="1 site, 1 O-linked glycan (1 site)"/>
</dbReference>
<dbReference type="iPTMnet" id="Q6UDR6"/>
<dbReference type="PhosphoSitePlus" id="Q6UDR6"/>
<dbReference type="BioMuta" id="SPINT4"/>
<dbReference type="DMDM" id="74749362"/>
<dbReference type="MassIVE" id="Q6UDR6"/>
<dbReference type="PaxDb" id="9606-ENSP00000279058"/>
<dbReference type="PeptideAtlas" id="Q6UDR6"/>
<dbReference type="Antibodypedia" id="78024">
    <property type="antibodies" value="5 antibodies from 5 providers"/>
</dbReference>
<dbReference type="DNASU" id="391253"/>
<dbReference type="Ensembl" id="ENST00000279058.4">
    <property type="protein sequence ID" value="ENSP00000279058.3"/>
    <property type="gene ID" value="ENSG00000149651.4"/>
</dbReference>
<dbReference type="GeneID" id="391253"/>
<dbReference type="KEGG" id="hsa:391253"/>
<dbReference type="MANE-Select" id="ENST00000279058.4">
    <property type="protein sequence ID" value="ENSP00000279058.3"/>
    <property type="RefSeq nucleotide sequence ID" value="NM_178455.3"/>
    <property type="RefSeq protein sequence ID" value="NP_848550.1"/>
</dbReference>
<dbReference type="UCSC" id="uc002xpe.2">
    <property type="organism name" value="human"/>
</dbReference>
<dbReference type="AGR" id="HGNC:16130"/>
<dbReference type="CTD" id="391253"/>
<dbReference type="GeneCards" id="SPINT4"/>
<dbReference type="HGNC" id="HGNC:16130">
    <property type="gene designation" value="SPINT4"/>
</dbReference>
<dbReference type="HPA" id="ENSG00000149651">
    <property type="expression patterns" value="Tissue enriched (epididymis)"/>
</dbReference>
<dbReference type="MIM" id="619430">
    <property type="type" value="gene"/>
</dbReference>
<dbReference type="neXtProt" id="NX_Q6UDR6"/>
<dbReference type="PharmGKB" id="PA25679"/>
<dbReference type="VEuPathDB" id="HostDB:ENSG00000149651"/>
<dbReference type="eggNOG" id="KOG4295">
    <property type="taxonomic scope" value="Eukaryota"/>
</dbReference>
<dbReference type="GeneTree" id="ENSGT00390000004362"/>
<dbReference type="HOGENOM" id="CLU_164133_0_3_1"/>
<dbReference type="InParanoid" id="Q6UDR6"/>
<dbReference type="OMA" id="FKLKIEC"/>
<dbReference type="OrthoDB" id="4473401at2759"/>
<dbReference type="PAN-GO" id="Q6UDR6">
    <property type="GO annotations" value="0 GO annotations based on evolutionary models"/>
</dbReference>
<dbReference type="PhylomeDB" id="Q6UDR6"/>
<dbReference type="TreeFam" id="TF338169"/>
<dbReference type="PathwayCommons" id="Q6UDR6"/>
<dbReference type="BioGRID-ORCS" id="391253">
    <property type="hits" value="13 hits in 1125 CRISPR screens"/>
</dbReference>
<dbReference type="GenomeRNAi" id="391253"/>
<dbReference type="Pharos" id="Q6UDR6">
    <property type="development level" value="Tdark"/>
</dbReference>
<dbReference type="PRO" id="PR:Q6UDR6"/>
<dbReference type="Proteomes" id="UP000005640">
    <property type="component" value="Chromosome 20"/>
</dbReference>
<dbReference type="RNAct" id="Q6UDR6">
    <property type="molecule type" value="protein"/>
</dbReference>
<dbReference type="Bgee" id="ENSG00000149651">
    <property type="expression patterns" value="Expressed in urinary bladder and 18 other cell types or tissues"/>
</dbReference>
<dbReference type="ExpressionAtlas" id="Q6UDR6">
    <property type="expression patterns" value="baseline and differential"/>
</dbReference>
<dbReference type="GO" id="GO:0005576">
    <property type="term" value="C:extracellular region"/>
    <property type="evidence" value="ECO:0007669"/>
    <property type="project" value="UniProtKB-SubCell"/>
</dbReference>
<dbReference type="GO" id="GO:0004867">
    <property type="term" value="F:serine-type endopeptidase inhibitor activity"/>
    <property type="evidence" value="ECO:0007669"/>
    <property type="project" value="UniProtKB-KW"/>
</dbReference>
<dbReference type="CDD" id="cd00109">
    <property type="entry name" value="Kunitz-type"/>
    <property type="match status" value="1"/>
</dbReference>
<dbReference type="Gene3D" id="4.10.410.10">
    <property type="entry name" value="Pancreatic trypsin inhibitor Kunitz domain"/>
    <property type="match status" value="1"/>
</dbReference>
<dbReference type="InterPro" id="IPR002223">
    <property type="entry name" value="Kunitz_BPTI"/>
</dbReference>
<dbReference type="InterPro" id="IPR036880">
    <property type="entry name" value="Kunitz_BPTI_sf"/>
</dbReference>
<dbReference type="InterPro" id="IPR042943">
    <property type="entry name" value="SPINT4"/>
</dbReference>
<dbReference type="PANTHER" id="PTHR47898">
    <property type="entry name" value="KUNITZ-TYPE PROTEASE INHIBITOR 4"/>
    <property type="match status" value="1"/>
</dbReference>
<dbReference type="PANTHER" id="PTHR47898:SF1">
    <property type="entry name" value="KUNITZ-TYPE PROTEASE INHIBITOR 4"/>
    <property type="match status" value="1"/>
</dbReference>
<dbReference type="Pfam" id="PF00014">
    <property type="entry name" value="Kunitz_BPTI"/>
    <property type="match status" value="1"/>
</dbReference>
<dbReference type="PRINTS" id="PR00759">
    <property type="entry name" value="BASICPTASE"/>
</dbReference>
<dbReference type="SMART" id="SM00131">
    <property type="entry name" value="KU"/>
    <property type="match status" value="1"/>
</dbReference>
<dbReference type="SUPFAM" id="SSF57362">
    <property type="entry name" value="BPTI-like"/>
    <property type="match status" value="1"/>
</dbReference>
<dbReference type="PROSITE" id="PS50279">
    <property type="entry name" value="BPTI_KUNITZ_2"/>
    <property type="match status" value="1"/>
</dbReference>
<evidence type="ECO:0000255" key="1"/>
<evidence type="ECO:0000255" key="2">
    <source>
        <dbReference type="PROSITE-ProRule" id="PRU00031"/>
    </source>
</evidence>
<evidence type="ECO:0000305" key="3"/>
<protein>
    <recommendedName>
        <fullName>Kunitz-type protease inhibitor 4</fullName>
    </recommendedName>
</protein>
<feature type="signal peptide" evidence="1">
    <location>
        <begin position="1"/>
        <end position="24"/>
    </location>
</feature>
<feature type="chain" id="PRO_0000308327" description="Kunitz-type protease inhibitor 4">
    <location>
        <begin position="25"/>
        <end position="99"/>
    </location>
</feature>
<feature type="domain" description="BPTI/Kunitz inhibitor" evidence="2">
    <location>
        <begin position="41"/>
        <end position="91"/>
    </location>
</feature>
<feature type="disulfide bond" evidence="2">
    <location>
        <begin position="41"/>
        <end position="91"/>
    </location>
</feature>
<feature type="disulfide bond" evidence="2">
    <location>
        <begin position="50"/>
        <end position="74"/>
    </location>
</feature>
<feature type="sequence variant" id="VAR_050068" description="In dbSNP:rs16990631.">
    <original>A</original>
    <variation>E</variation>
    <location>
        <position position="30"/>
    </location>
</feature>
<feature type="sequence variant" id="VAR_036795" description="In dbSNP:rs6017667.">
    <original>G</original>
    <variation>S</variation>
    <location>
        <position position="73"/>
    </location>
</feature>
<sequence>MKSAKLGFLLRFFIFCSLNTLLLGGVNKIAEKICGDLKDPCKLDMNFGSCYEVHFRYFYNRTSKRCETFVFSGCNGNLNNFKLKIEREVACVAKYKPPR</sequence>
<gene>
    <name type="primary">SPINT4</name>
    <name type="synonym">C20orf137</name>
</gene>
<comment type="subcellular location">
    <subcellularLocation>
        <location evidence="3">Secreted</location>
    </subcellularLocation>
</comment>